<gene>
    <name evidence="11" type="primary">tmoB</name>
</gene>
<reference key="1">
    <citation type="journal article" date="1991" name="J. Bacteriol.">
        <title>Cloning and characterization of a Pseudomonas mendocina KR1 gene cluster encoding toluene-4-monooxygenase.</title>
        <authorList>
            <person name="Yen K.-M."/>
            <person name="Karl M.R."/>
            <person name="Blatt L.M."/>
            <person name="Simon M.J."/>
            <person name="Winter R.B."/>
            <person name="Fausset P.R."/>
            <person name="Lu H.S."/>
            <person name="Harcourt A.A."/>
            <person name="Chen K.K."/>
        </authorList>
    </citation>
    <scope>NUCLEOTIDE SEQUENCE [GENOMIC DNA]</scope>
    <scope>PROTEIN SEQUENCE OF 2-28</scope>
    <scope>FUNCTION</scope>
    <scope>DISRUPTION PHENOTYPE</scope>
    <source>
        <strain>KR1</strain>
    </source>
</reference>
<reference key="2">
    <citation type="journal article" date="2004" name="Appl. Environ. Microbiol.">
        <title>Oxidation of benzene to phenol, catechol, and 1,2,3-trihydroxybenzene by toluene 4-monooxygenase of Pseudomonas mendocina KR1 and toluene 3-monooxygenase of Ralstonia pickettii PKO1.</title>
        <authorList>
            <person name="Tao Y."/>
            <person name="Fishman A."/>
            <person name="Bentley W.E."/>
            <person name="Wood T.K."/>
        </authorList>
    </citation>
    <scope>NUCLEOTIDE SEQUENCE [GENOMIC DNA]</scope>
    <scope>FUNCTION</scope>
    <scope>CATALYTIC ACTIVITY</scope>
    <scope>SUBSTRATE SPECIFICITY</scope>
    <scope>PATHWAY</scope>
    <source>
        <strain evidence="15">KR1</strain>
    </source>
</reference>
<reference key="3">
    <citation type="journal article" date="1991" name="J. Bacteriol.">
        <title>Toluene-4-monooxygenase, a three-component enzyme system that catalyzes the oxidation of toluene to p-cresol in Pseudomonas mendocina KR1.</title>
        <authorList>
            <person name="Whited G.M."/>
            <person name="Gibson D.T."/>
        </authorList>
    </citation>
    <scope>FUNCTION</scope>
    <scope>CATALYTIC ACTIVITY</scope>
    <scope>BIOPHYSICOCHEMICAL PROPERTIES</scope>
    <scope>ACTIVITY REGULATION</scope>
    <source>
        <strain>KR1</strain>
    </source>
</reference>
<reference key="4">
    <citation type="journal article" date="2008" name="Proc. Natl. Acad. Sci. U.S.A.">
        <title>Structural consequences of effector protein complex formation in a diiron hydroxylase.</title>
        <authorList>
            <person name="Bailey L.J."/>
            <person name="McCoy J.G."/>
            <person name="Phillips G.N. Jr."/>
            <person name="Fox B.G."/>
        </authorList>
    </citation>
    <scope>X-RAY CRYSTALLOGRAPHY (1.68 ANGSTROMS)</scope>
    <scope>SUBUNIT</scope>
</reference>
<reference key="5">
    <citation type="journal article" date="2009" name="Biochemistry">
        <title>Role for threonine 201 in the catalytic cycle of the soluble diiron hydroxylase toluene 4-monooxygenase.</title>
        <authorList>
            <person name="Elsen N.L."/>
            <person name="Bailey L.J."/>
            <person name="Hauser A.D."/>
            <person name="Fox B.G."/>
        </authorList>
    </citation>
    <scope>X-RAY CRYSTALLOGRAPHY (1.52 ANGSTROMS)</scope>
    <scope>FUNCTION</scope>
    <scope>CATALYTIC ACTIVITY</scope>
    <scope>SUBUNIT</scope>
</reference>
<reference key="6">
    <citation type="journal article" date="2009" name="Biochemistry">
        <title>Crystallographic and catalytic studies of the peroxide-shunt reaction in a diiron hydroxylase.</title>
        <authorList>
            <person name="Bailey L.J."/>
            <person name="Fox B.G."/>
        </authorList>
    </citation>
    <scope>X-RAY CRYSTALLOGRAPHY (1.90 ANGSTROMS)</scope>
    <scope>FUNCTION</scope>
    <scope>CATALYTIC ACTIVITY</scope>
    <scope>SUBUNIT</scope>
</reference>
<reference key="7">
    <citation type="journal article" date="2012" name="Biochemistry">
        <title>Crystallographic analysis of active site contributions to regiospecificity in the diiron enzyme toluene 4-monooxygenase.</title>
        <authorList>
            <person name="Bailey L.J."/>
            <person name="Acheson J.F."/>
            <person name="McCoy J.G."/>
            <person name="Elsen N.L."/>
            <person name="Phillips G.N. Jr."/>
            <person name="Fox B.G."/>
        </authorList>
    </citation>
    <scope>X-RAY CRYSTALLOGRAPHY (1.75 ANGSTROMS)</scope>
    <scope>SUBUNIT</scope>
    <source>
        <strain>KR1</strain>
    </source>
</reference>
<reference key="8">
    <citation type="journal article" date="2014" name="Nat. Commun.">
        <title>Structural basis for biomolecular recognition in overlapping binding sites in a diiron enzyme system.</title>
        <authorList>
            <person name="Acheson J.F."/>
            <person name="Bailey L.J."/>
            <person name="Elsen N.L."/>
            <person name="Fox B.G."/>
        </authorList>
    </citation>
    <scope>X-RAY CRYSTALLOGRAPHY (2.05 ANGSTROMS) OF 2-83</scope>
    <scope>SUBUNIT</scope>
</reference>
<reference key="9">
    <citation type="journal article" date="2017" name="Nature">
        <title>In-crystal reaction cycle of a toluene-bound diiron hydroxylase.</title>
        <authorList>
            <person name="Acheson J.F."/>
            <person name="Bailey L.J."/>
            <person name="Brunold T.C."/>
            <person name="Fox B.G."/>
        </authorList>
    </citation>
    <scope>X-RAY CRYSTALLOGRAPHY (1.72 ANGSTROMS)</scope>
    <scope>SUBUNIT</scope>
</reference>
<sequence length="84" mass="9588">MSAFPVHAAFEKDFLVQLVVVDLNDSMDQVAEKVAYHCVNRRVAPREGVMRVRKHRSTELFPRDMTIAESGLNPTEVIDVVFEE</sequence>
<organism>
    <name type="scientific">Ectopseudomonas mendocina</name>
    <name type="common">Pseudomonas mendocina</name>
    <dbReference type="NCBI Taxonomy" id="300"/>
    <lineage>
        <taxon>Bacteria</taxon>
        <taxon>Pseudomonadati</taxon>
        <taxon>Pseudomonadota</taxon>
        <taxon>Gammaproteobacteria</taxon>
        <taxon>Pseudomonadales</taxon>
        <taxon>Pseudomonadaceae</taxon>
        <taxon>Ectopseudomonas</taxon>
    </lineage>
</organism>
<evidence type="ECO:0000269" key="1">
    <source>
    </source>
</evidence>
<evidence type="ECO:0000269" key="2">
    <source>
    </source>
</evidence>
<evidence type="ECO:0000269" key="3">
    <source>
    </source>
</evidence>
<evidence type="ECO:0000269" key="4">
    <source>
    </source>
</evidence>
<evidence type="ECO:0000269" key="5">
    <source>
    </source>
</evidence>
<evidence type="ECO:0000269" key="6">
    <source>
    </source>
</evidence>
<evidence type="ECO:0000269" key="7">
    <source>
    </source>
</evidence>
<evidence type="ECO:0000269" key="8">
    <source>
    </source>
</evidence>
<evidence type="ECO:0000269" key="9">
    <source>
    </source>
</evidence>
<evidence type="ECO:0000303" key="10">
    <source>
    </source>
</evidence>
<evidence type="ECO:0000303" key="11">
    <source>
    </source>
</evidence>
<evidence type="ECO:0000305" key="12"/>
<evidence type="ECO:0000305" key="13">
    <source>
    </source>
</evidence>
<evidence type="ECO:0000305" key="14">
    <source>
    </source>
</evidence>
<evidence type="ECO:0000312" key="15">
    <source>
        <dbReference type="EMBL" id="AAS66661.1"/>
    </source>
</evidence>
<evidence type="ECO:0007829" key="16">
    <source>
        <dbReference type="PDB" id="3GE3"/>
    </source>
</evidence>
<evidence type="ECO:0007829" key="17">
    <source>
        <dbReference type="PDB" id="3Q2A"/>
    </source>
</evidence>
<proteinExistence type="evidence at protein level"/>
<comment type="function">
    <text evidence="1 2 4 5 6">Component of the toluene-4-monooxygenase multicomponent enzyme system which catalyzes the O2- and NADH-dependent hydroxylation of toluene to form p-cresol (PubMed:15240250, PubMed:1885512, PubMed:19290655, PubMed:19705873, PubMed:2019563). Also able to convert benzene to phenol, catechol, and 1,2,3-trihydroxybenzene by successive hydroxylations (PubMed:15240250).</text>
</comment>
<comment type="catalytic activity">
    <reaction evidence="1 4 5 14">
        <text>toluene + NADH + O2 + H(+) = 4-methylphenol + NAD(+) + H2O</text>
        <dbReference type="Rhea" id="RHEA:41380"/>
        <dbReference type="ChEBI" id="CHEBI:15377"/>
        <dbReference type="ChEBI" id="CHEBI:15378"/>
        <dbReference type="ChEBI" id="CHEBI:15379"/>
        <dbReference type="ChEBI" id="CHEBI:17578"/>
        <dbReference type="ChEBI" id="CHEBI:17847"/>
        <dbReference type="ChEBI" id="CHEBI:57540"/>
        <dbReference type="ChEBI" id="CHEBI:57945"/>
        <dbReference type="EC" id="1.14.13.236"/>
    </reaction>
</comment>
<comment type="activity regulation">
    <text evidence="6">Inhibited by Zn(2+) and Cu(2+).</text>
</comment>
<comment type="biophysicochemical properties">
    <phDependence>
        <text evidence="6">Optimum pH is 6.8.</text>
    </phDependence>
</comment>
<comment type="pathway">
    <text evidence="13">Xenobiotic degradation; toluene degradation.</text>
</comment>
<comment type="subunit">
    <text evidence="3 4 5 7 8 9">The alkene monooxygenase multicomponent enzyme system is composed of an electron transfer component and a monooxygenase component interacting with the effector protein TmoD. The electron transfer component is composed of a ferredoxin reductase (TmoF) and a ferredoxin (TmoC), and the monooxygenase component is formed by a heterohexamer (dimer of heterotrimers) of two alpha subunits (TmoA), two beta subunits (TmoE) and two gamma subunits (TmoB).</text>
</comment>
<comment type="disruption phenotype">
    <text evidence="2">Cells lacking this gene show a complete loss of toluene-4-monooxygenase activity.</text>
</comment>
<comment type="similarity">
    <text evidence="12">Belongs to the TmoB/XamoB family.</text>
</comment>
<protein>
    <recommendedName>
        <fullName evidence="10">Toluene-4-monooxygenase system, hydroxylase component subunit gamma</fullName>
        <shortName evidence="11">T4MO</shortName>
        <ecNumber evidence="1 4 5 14">1.14.13.236</ecNumber>
    </recommendedName>
    <alternativeName>
        <fullName evidence="11">Toluene-4-monooxygenase hydroxylase subunit</fullName>
        <shortName evidence="11">T4moH</shortName>
    </alternativeName>
    <alternativeName>
        <fullName evidence="11">Toluene-4-monooxygenase system protein B</fullName>
        <shortName evidence="11">T4moB</shortName>
    </alternativeName>
</protein>
<feature type="initiator methionine" description="Removed" evidence="2">
    <location>
        <position position="1"/>
    </location>
</feature>
<feature type="chain" id="PRO_0000072600" description="Toluene-4-monooxygenase system, hydroxylase component subunit gamma">
    <location>
        <begin position="2"/>
        <end position="84"/>
    </location>
</feature>
<feature type="strand" evidence="16">
    <location>
        <begin position="3"/>
        <end position="10"/>
    </location>
</feature>
<feature type="strand" evidence="16">
    <location>
        <begin position="14"/>
        <end position="22"/>
    </location>
</feature>
<feature type="helix" evidence="16">
    <location>
        <begin position="27"/>
        <end position="36"/>
    </location>
</feature>
<feature type="turn" evidence="16">
    <location>
        <begin position="37"/>
        <end position="41"/>
    </location>
</feature>
<feature type="strand" evidence="16">
    <location>
        <begin position="50"/>
        <end position="54"/>
    </location>
</feature>
<feature type="strand" evidence="17">
    <location>
        <begin position="58"/>
        <end position="60"/>
    </location>
</feature>
<feature type="helix" evidence="16">
    <location>
        <begin position="67"/>
        <end position="70"/>
    </location>
</feature>
<feature type="strand" evidence="16">
    <location>
        <begin position="77"/>
        <end position="82"/>
    </location>
</feature>
<accession>Q00457</accession>
<accession>Q6Q8Q6</accession>
<name>TMOB_ECTME</name>
<keyword id="KW-0002">3D-structure</keyword>
<keyword id="KW-0058">Aromatic hydrocarbons catabolism</keyword>
<keyword id="KW-0903">Direct protein sequencing</keyword>
<keyword id="KW-0503">Monooxygenase</keyword>
<keyword id="KW-0520">NAD</keyword>
<keyword id="KW-0560">Oxidoreductase</keyword>
<dbReference type="EC" id="1.14.13.236" evidence="1 4 5 14"/>
<dbReference type="EMBL" id="M65106">
    <property type="protein sequence ID" value="AAA26000.1"/>
    <property type="molecule type" value="Genomic_DNA"/>
</dbReference>
<dbReference type="EMBL" id="AY552601">
    <property type="protein sequence ID" value="AAS66661.1"/>
    <property type="molecule type" value="Genomic_DNA"/>
</dbReference>
<dbReference type="PDB" id="3DHG">
    <property type="method" value="X-ray"/>
    <property type="resolution" value="1.85 A"/>
    <property type="chains" value="C/F=1-84"/>
</dbReference>
<dbReference type="PDB" id="3DHH">
    <property type="method" value="X-ray"/>
    <property type="resolution" value="1.94 A"/>
    <property type="chains" value="C=1-84"/>
</dbReference>
<dbReference type="PDB" id="3DHI">
    <property type="method" value="X-ray"/>
    <property type="resolution" value="1.68 A"/>
    <property type="chains" value="C=1-84"/>
</dbReference>
<dbReference type="PDB" id="3GE3">
    <property type="method" value="X-ray"/>
    <property type="resolution" value="1.52 A"/>
    <property type="chains" value="C=1-84"/>
</dbReference>
<dbReference type="PDB" id="3GE8">
    <property type="method" value="X-ray"/>
    <property type="resolution" value="2.19 A"/>
    <property type="chains" value="C/G=1-84"/>
</dbReference>
<dbReference type="PDB" id="3I5J">
    <property type="method" value="X-ray"/>
    <property type="resolution" value="1.90 A"/>
    <property type="chains" value="C=1-84"/>
</dbReference>
<dbReference type="PDB" id="3I63">
    <property type="method" value="X-ray"/>
    <property type="resolution" value="2.09 A"/>
    <property type="chains" value="C=1-84"/>
</dbReference>
<dbReference type="PDB" id="3Q14">
    <property type="method" value="X-ray"/>
    <property type="resolution" value="1.75 A"/>
    <property type="chains" value="C=1-84"/>
</dbReference>
<dbReference type="PDB" id="3Q2A">
    <property type="method" value="X-ray"/>
    <property type="resolution" value="1.99 A"/>
    <property type="chains" value="C=1-84"/>
</dbReference>
<dbReference type="PDB" id="3Q3M">
    <property type="method" value="X-ray"/>
    <property type="resolution" value="1.75 A"/>
    <property type="chains" value="C/G=1-84"/>
</dbReference>
<dbReference type="PDB" id="3Q3N">
    <property type="method" value="X-ray"/>
    <property type="resolution" value="1.84 A"/>
    <property type="chains" value="C=1-84"/>
</dbReference>
<dbReference type="PDB" id="3Q3O">
    <property type="method" value="X-ray"/>
    <property type="resolution" value="1.95 A"/>
    <property type="chains" value="C=1-84"/>
</dbReference>
<dbReference type="PDB" id="3RI7">
    <property type="method" value="X-ray"/>
    <property type="resolution" value="2.10 A"/>
    <property type="chains" value="C=2-84"/>
</dbReference>
<dbReference type="PDB" id="3RMK">
    <property type="method" value="X-ray"/>
    <property type="resolution" value="1.95 A"/>
    <property type="chains" value="C/F=2-84"/>
</dbReference>
<dbReference type="PDB" id="4P1B">
    <property type="method" value="X-ray"/>
    <property type="resolution" value="2.05 A"/>
    <property type="chains" value="C/F=2-83"/>
</dbReference>
<dbReference type="PDB" id="4P1C">
    <property type="method" value="X-ray"/>
    <property type="resolution" value="2.40 A"/>
    <property type="chains" value="C/F=2-83"/>
</dbReference>
<dbReference type="PDB" id="5TDS">
    <property type="method" value="X-ray"/>
    <property type="resolution" value="1.72 A"/>
    <property type="chains" value="C/F=1-84"/>
</dbReference>
<dbReference type="PDB" id="5TDT">
    <property type="method" value="X-ray"/>
    <property type="resolution" value="1.82 A"/>
    <property type="chains" value="C/G=1-84"/>
</dbReference>
<dbReference type="PDB" id="5TDU">
    <property type="method" value="X-ray"/>
    <property type="resolution" value="1.74 A"/>
    <property type="chains" value="C=1-84"/>
</dbReference>
<dbReference type="PDB" id="5TDV">
    <property type="method" value="X-ray"/>
    <property type="resolution" value="2.00 A"/>
    <property type="chains" value="C/G=1-84"/>
</dbReference>
<dbReference type="PDBsum" id="3DHG"/>
<dbReference type="PDBsum" id="3DHH"/>
<dbReference type="PDBsum" id="3DHI"/>
<dbReference type="PDBsum" id="3GE3"/>
<dbReference type="PDBsum" id="3GE8"/>
<dbReference type="PDBsum" id="3I5J"/>
<dbReference type="PDBsum" id="3I63"/>
<dbReference type="PDBsum" id="3Q14"/>
<dbReference type="PDBsum" id="3Q2A"/>
<dbReference type="PDBsum" id="3Q3M"/>
<dbReference type="PDBsum" id="3Q3N"/>
<dbReference type="PDBsum" id="3Q3O"/>
<dbReference type="PDBsum" id="3RI7"/>
<dbReference type="PDBsum" id="3RMK"/>
<dbReference type="PDBsum" id="4P1B"/>
<dbReference type="PDBsum" id="4P1C"/>
<dbReference type="PDBsum" id="5TDS"/>
<dbReference type="PDBsum" id="5TDT"/>
<dbReference type="PDBsum" id="5TDU"/>
<dbReference type="PDBsum" id="5TDV"/>
<dbReference type="SMR" id="Q00457"/>
<dbReference type="DIP" id="DIP-48645N"/>
<dbReference type="IntAct" id="Q00457">
    <property type="interactions" value="1"/>
</dbReference>
<dbReference type="KEGG" id="ag:AAA26000"/>
<dbReference type="BioCyc" id="MetaCyc:MONOMER-2507"/>
<dbReference type="BRENDA" id="1.14.13.236">
    <property type="organism ID" value="31258"/>
</dbReference>
<dbReference type="UniPathway" id="UPA00273"/>
<dbReference type="EvolutionaryTrace" id="Q00457"/>
<dbReference type="GO" id="GO:0018638">
    <property type="term" value="F:toluene 4-monooxygenase activity"/>
    <property type="evidence" value="ECO:0007669"/>
    <property type="project" value="UniProtKB-EC"/>
</dbReference>
<dbReference type="GO" id="GO:0042203">
    <property type="term" value="P:toluene catabolic process"/>
    <property type="evidence" value="ECO:0007669"/>
    <property type="project" value="UniProtKB-UniPathway"/>
</dbReference>
<dbReference type="CDD" id="cd17042">
    <property type="entry name" value="Ubl_TmoB"/>
    <property type="match status" value="1"/>
</dbReference>
<dbReference type="Gene3D" id="3.10.20.270">
    <property type="entry name" value="TmoB-like"/>
    <property type="match status" value="1"/>
</dbReference>
<dbReference type="InterPro" id="IPR036713">
    <property type="entry name" value="TmoB-like_sf"/>
</dbReference>
<dbReference type="InterPro" id="IPR009355">
    <property type="entry name" value="Toluene_mOase_B"/>
</dbReference>
<dbReference type="Pfam" id="PF06234">
    <property type="entry name" value="TmoB"/>
    <property type="match status" value="1"/>
</dbReference>
<dbReference type="SUPFAM" id="SSF110814">
    <property type="entry name" value="TmoB-like"/>
    <property type="match status" value="1"/>
</dbReference>